<comment type="subunit">
    <text evidence="2">Monomer.</text>
</comment>
<comment type="similarity">
    <text evidence="3">To phage Mu protein gp35.</text>
</comment>
<comment type="sequence caution" evidence="3">
    <conflict type="frameshift">
        <sequence resource="EMBL-CDS" id="AAC23165"/>
    </conflict>
    <text>Produces two separate ORFs.</text>
</comment>
<comment type="sequence caution" evidence="3">
    <conflict type="frameshift">
        <sequence resource="EMBL-CDS" id="AAC23166"/>
    </conflict>
    <text>Produces two separate ORFs.</text>
</comment>
<dbReference type="EMBL" id="L42023">
    <property type="protein sequence ID" value="AAC23165.1"/>
    <property type="status" value="ALT_FRAME"/>
    <property type="molecule type" value="Genomic_DNA"/>
</dbReference>
<dbReference type="EMBL" id="L42023">
    <property type="protein sequence ID" value="AAC23166.1"/>
    <property type="status" value="ALT_FRAME"/>
    <property type="molecule type" value="Genomic_DNA"/>
</dbReference>
<dbReference type="PIR" id="D64033">
    <property type="entry name" value="D64033"/>
</dbReference>
<dbReference type="PIR" id="E64033">
    <property type="entry name" value="E64033"/>
</dbReference>
<dbReference type="PDB" id="2OUT">
    <property type="method" value="NMR"/>
    <property type="chains" value="A=1-67"/>
</dbReference>
<dbReference type="PDBsum" id="2OUT"/>
<dbReference type="BMRB" id="P44228"/>
<dbReference type="SMR" id="P44228"/>
<dbReference type="STRING" id="71421.HI_1506"/>
<dbReference type="EnsemblBacteria" id="AAC23165">
    <property type="protein sequence ID" value="AAC23165"/>
    <property type="gene ID" value="HI_1506"/>
</dbReference>
<dbReference type="EnsemblBacteria" id="AAC23166">
    <property type="protein sequence ID" value="AAC23166"/>
    <property type="gene ID" value="HI_1507"/>
</dbReference>
<dbReference type="KEGG" id="hin:HI_1506"/>
<dbReference type="KEGG" id="hin:HI_1507"/>
<dbReference type="eggNOG" id="ENOG5033NCI">
    <property type="taxonomic scope" value="Bacteria"/>
</dbReference>
<dbReference type="HOGENOM" id="CLU_2508088_0_0_6"/>
<dbReference type="EvolutionaryTrace" id="P44228"/>
<dbReference type="Proteomes" id="UP000000579">
    <property type="component" value="Chromosome"/>
</dbReference>
<dbReference type="GO" id="GO:0003677">
    <property type="term" value="F:DNA binding"/>
    <property type="evidence" value="ECO:0000269"/>
    <property type="project" value="DisProt"/>
</dbReference>
<dbReference type="CDD" id="cd12935">
    <property type="entry name" value="LEM_like"/>
    <property type="match status" value="1"/>
</dbReference>
<dbReference type="DisProt" id="DP01440"/>
<dbReference type="Gene3D" id="3.40.5.80">
    <property type="match status" value="1"/>
</dbReference>
<dbReference type="Gene3D" id="1.10.720.30">
    <property type="entry name" value="SAP domain"/>
    <property type="match status" value="1"/>
</dbReference>
<dbReference type="InterPro" id="IPR041227">
    <property type="entry name" value="FluMu_N"/>
</dbReference>
<dbReference type="InterPro" id="IPR025856">
    <property type="entry name" value="HeH/LEM_domain"/>
</dbReference>
<dbReference type="InterPro" id="IPR036269">
    <property type="entry name" value="Rho_N_sf"/>
</dbReference>
<dbReference type="InterPro" id="IPR036361">
    <property type="entry name" value="SAP_dom_sf"/>
</dbReference>
<dbReference type="Pfam" id="PF17891">
    <property type="entry name" value="FluMu_N"/>
    <property type="match status" value="1"/>
</dbReference>
<dbReference type="Pfam" id="PF12949">
    <property type="entry name" value="HeH"/>
    <property type="match status" value="1"/>
</dbReference>
<dbReference type="SUPFAM" id="SSF160059">
    <property type="entry name" value="PriA/YqbF domain"/>
    <property type="match status" value="1"/>
</dbReference>
<dbReference type="SUPFAM" id="SSF68912">
    <property type="entry name" value="Rho N-terminal domain-like"/>
    <property type="match status" value="1"/>
</dbReference>
<accession>P44228</accession>
<accession>P44229</accession>
<keyword id="KW-0002">3D-structure</keyword>
<keyword id="KW-1185">Reference proteome</keyword>
<reference key="1">
    <citation type="journal article" date="1995" name="Science">
        <title>Whole-genome random sequencing and assembly of Haemophilus influenzae Rd.</title>
        <authorList>
            <person name="Fleischmann R.D."/>
            <person name="Adams M.D."/>
            <person name="White O."/>
            <person name="Clayton R.A."/>
            <person name="Kirkness E.F."/>
            <person name="Kerlavage A.R."/>
            <person name="Bult C.J."/>
            <person name="Tomb J.-F."/>
            <person name="Dougherty B.A."/>
            <person name="Merrick J.M."/>
            <person name="McKenney K."/>
            <person name="Sutton G.G."/>
            <person name="FitzHugh W."/>
            <person name="Fields C.A."/>
            <person name="Gocayne J.D."/>
            <person name="Scott J.D."/>
            <person name="Shirley R."/>
            <person name="Liu L.-I."/>
            <person name="Glodek A."/>
            <person name="Kelley J.M."/>
            <person name="Weidman J.F."/>
            <person name="Phillips C.A."/>
            <person name="Spriggs T."/>
            <person name="Hedblom E."/>
            <person name="Cotton M.D."/>
            <person name="Utterback T.R."/>
            <person name="Hanna M.C."/>
            <person name="Nguyen D.T."/>
            <person name="Saudek D.M."/>
            <person name="Brandon R.C."/>
            <person name="Fine L.D."/>
            <person name="Fritchman J.L."/>
            <person name="Fuhrmann J.L."/>
            <person name="Geoghagen N.S.M."/>
            <person name="Gnehm C.L."/>
            <person name="McDonald L.A."/>
            <person name="Small K.V."/>
            <person name="Fraser C.M."/>
            <person name="Smith H.O."/>
            <person name="Venter J.C."/>
        </authorList>
    </citation>
    <scope>NUCLEOTIDE SEQUENCE [LARGE SCALE GENOMIC DNA]</scope>
    <source>
        <strain>ATCC 51907 / DSM 11121 / KW20 / Rd</strain>
    </source>
</reference>
<reference key="2">
    <citation type="journal article" date="2007" name="Protein Sci.">
        <title>Solution structure of HI1506, a novel two-domain protein from Haemophilus influenzae.</title>
        <authorList>
            <person name="Sari N."/>
            <person name="He Y."/>
            <person name="Doseeva V."/>
            <person name="Surabian K."/>
            <person name="Ramprakash J."/>
            <person name="Schwarz F."/>
            <person name="Herzberg O."/>
            <person name="Orban J."/>
        </authorList>
    </citation>
    <scope>STRUCTURE BY NMR</scope>
    <scope>IDENTIFICATION</scope>
    <scope>SUBUNIT</scope>
</reference>
<name>VG35_HAEIN</name>
<gene>
    <name type="ordered locus">HI_1506/HI_1507</name>
</gene>
<sequence>MDKTFCVVVQNRIKEGYRRAGFSFHLGDNSLAAVSESQLAQLKADPRLVVQITETGSQEGGEGLSKEPAGSDEQKQLRADPPSTDLNTFTVEQLKAQLTERGITFKQSATKAELIALFAPADGEKSEA</sequence>
<proteinExistence type="evidence at protein level"/>
<protein>
    <recommendedName>
        <fullName>Mu-like prophage FluMu protein gp35</fullName>
    </recommendedName>
</protein>
<evidence type="ECO:0000256" key="1">
    <source>
        <dbReference type="SAM" id="MobiDB-lite"/>
    </source>
</evidence>
<evidence type="ECO:0000269" key="2">
    <source>
    </source>
</evidence>
<evidence type="ECO:0000305" key="3"/>
<evidence type="ECO:0007829" key="4">
    <source>
        <dbReference type="PDB" id="2OUT"/>
    </source>
</evidence>
<feature type="chain" id="PRO_0000077827" description="Mu-like prophage FluMu protein gp35">
    <location>
        <begin position="1"/>
        <end position="128"/>
    </location>
</feature>
<feature type="region of interest" description="Disordered" evidence="1">
    <location>
        <begin position="53"/>
        <end position="87"/>
    </location>
</feature>
<feature type="strand" evidence="4">
    <location>
        <begin position="7"/>
        <end position="10"/>
    </location>
</feature>
<feature type="strand" evidence="4">
    <location>
        <begin position="20"/>
        <end position="22"/>
    </location>
</feature>
<feature type="strand" evidence="4">
    <location>
        <begin position="26"/>
        <end position="30"/>
    </location>
</feature>
<feature type="strand" evidence="4">
    <location>
        <begin position="34"/>
        <end position="36"/>
    </location>
</feature>
<feature type="helix" evidence="4">
    <location>
        <begin position="37"/>
        <end position="43"/>
    </location>
</feature>
<feature type="helix" evidence="4">
    <location>
        <begin position="92"/>
        <end position="101"/>
    </location>
</feature>
<feature type="strand" evidence="4">
    <location>
        <begin position="106"/>
        <end position="108"/>
    </location>
</feature>
<feature type="helix" evidence="4">
    <location>
        <begin position="112"/>
        <end position="117"/>
    </location>
</feature>
<organism>
    <name type="scientific">Haemophilus influenzae (strain ATCC 51907 / DSM 11121 / KW20 / Rd)</name>
    <dbReference type="NCBI Taxonomy" id="71421"/>
    <lineage>
        <taxon>Bacteria</taxon>
        <taxon>Pseudomonadati</taxon>
        <taxon>Pseudomonadota</taxon>
        <taxon>Gammaproteobacteria</taxon>
        <taxon>Pasteurellales</taxon>
        <taxon>Pasteurellaceae</taxon>
        <taxon>Haemophilus</taxon>
    </lineage>
</organism>